<comment type="function">
    <text evidence="2 3">Probable aspartic protease. May be involved in the regulation of exocytosis. Acts as a linker between the 19S proteasome and polyubiquitinated proteins via UBA domain interactions with ubiquitin for their subsequent degradation. Required for S-phase checkpoint control.</text>
</comment>
<comment type="subunit">
    <text evidence="1">Binds ubiquitin and polyubiquitinated proteins.</text>
</comment>
<comment type="subcellular location">
    <subcellularLocation>
        <location evidence="1">Cytoplasm</location>
    </subcellularLocation>
</comment>
<comment type="similarity">
    <text evidence="6">Belongs to the DDI1 family.</text>
</comment>
<protein>
    <recommendedName>
        <fullName>DNA damage-inducible protein 1</fullName>
        <ecNumber evidence="2">3.4.23.-</ecNumber>
    </recommendedName>
</protein>
<organism>
    <name type="scientific">Candida glabrata (strain ATCC 2001 / BCRC 20586 / JCM 3761 / NBRC 0622 / NRRL Y-65 / CBS 138)</name>
    <name type="common">Yeast</name>
    <name type="synonym">Nakaseomyces glabratus</name>
    <dbReference type="NCBI Taxonomy" id="284593"/>
    <lineage>
        <taxon>Eukaryota</taxon>
        <taxon>Fungi</taxon>
        <taxon>Dikarya</taxon>
        <taxon>Ascomycota</taxon>
        <taxon>Saccharomycotina</taxon>
        <taxon>Saccharomycetes</taxon>
        <taxon>Saccharomycetales</taxon>
        <taxon>Saccharomycetaceae</taxon>
        <taxon>Nakaseomyces</taxon>
    </lineage>
</organism>
<reference key="1">
    <citation type="journal article" date="2004" name="Nature">
        <title>Genome evolution in yeasts.</title>
        <authorList>
            <person name="Dujon B."/>
            <person name="Sherman D."/>
            <person name="Fischer G."/>
            <person name="Durrens P."/>
            <person name="Casaregola S."/>
            <person name="Lafontaine I."/>
            <person name="de Montigny J."/>
            <person name="Marck C."/>
            <person name="Neuveglise C."/>
            <person name="Talla E."/>
            <person name="Goffard N."/>
            <person name="Frangeul L."/>
            <person name="Aigle M."/>
            <person name="Anthouard V."/>
            <person name="Babour A."/>
            <person name="Barbe V."/>
            <person name="Barnay S."/>
            <person name="Blanchin S."/>
            <person name="Beckerich J.-M."/>
            <person name="Beyne E."/>
            <person name="Bleykasten C."/>
            <person name="Boisrame A."/>
            <person name="Boyer J."/>
            <person name="Cattolico L."/>
            <person name="Confanioleri F."/>
            <person name="de Daruvar A."/>
            <person name="Despons L."/>
            <person name="Fabre E."/>
            <person name="Fairhead C."/>
            <person name="Ferry-Dumazet H."/>
            <person name="Groppi A."/>
            <person name="Hantraye F."/>
            <person name="Hennequin C."/>
            <person name="Jauniaux N."/>
            <person name="Joyet P."/>
            <person name="Kachouri R."/>
            <person name="Kerrest A."/>
            <person name="Koszul R."/>
            <person name="Lemaire M."/>
            <person name="Lesur I."/>
            <person name="Ma L."/>
            <person name="Muller H."/>
            <person name="Nicaud J.-M."/>
            <person name="Nikolski M."/>
            <person name="Oztas S."/>
            <person name="Ozier-Kalogeropoulos O."/>
            <person name="Pellenz S."/>
            <person name="Potier S."/>
            <person name="Richard G.-F."/>
            <person name="Straub M.-L."/>
            <person name="Suleau A."/>
            <person name="Swennen D."/>
            <person name="Tekaia F."/>
            <person name="Wesolowski-Louvel M."/>
            <person name="Westhof E."/>
            <person name="Wirth B."/>
            <person name="Zeniou-Meyer M."/>
            <person name="Zivanovic Y."/>
            <person name="Bolotin-Fukuhara M."/>
            <person name="Thierry A."/>
            <person name="Bouchier C."/>
            <person name="Caudron B."/>
            <person name="Scarpelli C."/>
            <person name="Gaillardin C."/>
            <person name="Weissenbach J."/>
            <person name="Wincker P."/>
            <person name="Souciet J.-L."/>
        </authorList>
    </citation>
    <scope>NUCLEOTIDE SEQUENCE [LARGE SCALE GENOMIC DNA]</scope>
    <source>
        <strain>ATCC 2001 / BCRC 20586 / JCM 3761 / NBRC 0622 / NRRL Y-65 / CBS 138</strain>
    </source>
</reference>
<sequence>MQLTVTNDVNGEVYGPLELSGDMMLMDLVALLEVDCAFESGKQQLYFNGKELKPDVEKTLEELGIGNDDLIVIRGQPVSSNSIANSTSAIELDDDAYVEQFRLQLLSNSALRNSLRMPFADIDSLVNDPQQFKTHMGPVIIQRRRMQSAMPTNPYGIPDEEYKKLMTNPEDPEHKKRLQELQDKQLIDEQLRNALEYTPEVFAQVSMLYINMEINGHPVKAFVDSGAQMTIISPRLAEKTELKRFIDNRFIGEARGVGTGKILGRVHQVQVKIETQFIPCSFVVLDSNVDLLLGLDMLKRHQACIDLEKNVLRIAGTETKFLGEAEIPKGTSFDAVGNPQPPVEIKESADHSKKKMKTSFTITPKVKPVKADNLLNNSSPMGNTGRTFPEKTIKQLMDLGFSRQEVIQALVSTNGNAEFAASLLFQ</sequence>
<feature type="chain" id="PRO_0000285309" description="DNA damage-inducible protein 1">
    <location>
        <begin position="1"/>
        <end position="426"/>
    </location>
</feature>
<feature type="domain" description="Ubiquitin-like" evidence="5">
    <location>
        <begin position="1"/>
        <end position="80"/>
    </location>
</feature>
<feature type="domain" description="UBA" evidence="4">
    <location>
        <begin position="387"/>
        <end position="426"/>
    </location>
</feature>
<feature type="active site" evidence="6">
    <location>
        <position position="224"/>
    </location>
</feature>
<accession>Q6FQE9</accession>
<gene>
    <name type="primary">DDI1</name>
    <name type="ordered locus">CAGL0I06787g</name>
</gene>
<name>DDI1_CANGA</name>
<proteinExistence type="inferred from homology"/>
<dbReference type="EC" id="3.4.23.-" evidence="2"/>
<dbReference type="EMBL" id="CR380955">
    <property type="protein sequence ID" value="CAG60482.1"/>
    <property type="molecule type" value="Genomic_DNA"/>
</dbReference>
<dbReference type="RefSeq" id="XP_447545.1">
    <property type="nucleotide sequence ID" value="XM_447545.1"/>
</dbReference>
<dbReference type="SMR" id="Q6FQE9"/>
<dbReference type="FunCoup" id="Q6FQE9">
    <property type="interactions" value="305"/>
</dbReference>
<dbReference type="STRING" id="284593.Q6FQE9"/>
<dbReference type="MEROPS" id="A28.001"/>
<dbReference type="EnsemblFungi" id="CAGL0I06787g-T">
    <property type="protein sequence ID" value="CAGL0I06787g-T-p1"/>
    <property type="gene ID" value="CAGL0I06787g"/>
</dbReference>
<dbReference type="KEGG" id="cgr:2889069"/>
<dbReference type="CGD" id="CAL0130071">
    <property type="gene designation" value="CAGL0I06787g"/>
</dbReference>
<dbReference type="VEuPathDB" id="FungiDB:CAGL0I06787g"/>
<dbReference type="eggNOG" id="KOG0012">
    <property type="taxonomic scope" value="Eukaryota"/>
</dbReference>
<dbReference type="HOGENOM" id="CLU_020435_2_0_1"/>
<dbReference type="InParanoid" id="Q6FQE9"/>
<dbReference type="OMA" id="LYTADPF"/>
<dbReference type="Proteomes" id="UP000002428">
    <property type="component" value="Chromosome I"/>
</dbReference>
<dbReference type="GO" id="GO:0005737">
    <property type="term" value="C:cytoplasm"/>
    <property type="evidence" value="ECO:0007669"/>
    <property type="project" value="UniProtKB-SubCell"/>
</dbReference>
<dbReference type="GO" id="GO:0005886">
    <property type="term" value="C:plasma membrane"/>
    <property type="evidence" value="ECO:0007669"/>
    <property type="project" value="EnsemblFungi"/>
</dbReference>
<dbReference type="GO" id="GO:0004190">
    <property type="term" value="F:aspartic-type endopeptidase activity"/>
    <property type="evidence" value="ECO:0007669"/>
    <property type="project" value="UniProtKB-KW"/>
</dbReference>
<dbReference type="GO" id="GO:0031593">
    <property type="term" value="F:polyubiquitin modification-dependent protein binding"/>
    <property type="evidence" value="ECO:0007669"/>
    <property type="project" value="EnsemblFungi"/>
</dbReference>
<dbReference type="GO" id="GO:1904855">
    <property type="term" value="F:proteasome regulatory particle binding"/>
    <property type="evidence" value="ECO:0007669"/>
    <property type="project" value="EnsemblFungi"/>
</dbReference>
<dbReference type="GO" id="GO:0030674">
    <property type="term" value="F:protein-macromolecule adaptor activity"/>
    <property type="evidence" value="ECO:0007669"/>
    <property type="project" value="EnsemblFungi"/>
</dbReference>
<dbReference type="GO" id="GO:0000149">
    <property type="term" value="F:SNARE binding"/>
    <property type="evidence" value="ECO:0007669"/>
    <property type="project" value="EnsemblFungi"/>
</dbReference>
<dbReference type="GO" id="GO:0043130">
    <property type="term" value="F:ubiquitin binding"/>
    <property type="evidence" value="ECO:0007669"/>
    <property type="project" value="EnsemblFungi"/>
</dbReference>
<dbReference type="GO" id="GO:0045740">
    <property type="term" value="P:positive regulation of DNA replication"/>
    <property type="evidence" value="ECO:0007669"/>
    <property type="project" value="EnsemblFungi"/>
</dbReference>
<dbReference type="GO" id="GO:0009306">
    <property type="term" value="P:protein secretion"/>
    <property type="evidence" value="ECO:0007669"/>
    <property type="project" value="EnsemblFungi"/>
</dbReference>
<dbReference type="GO" id="GO:0043328">
    <property type="term" value="P:protein transport to vacuole involved in ubiquitin-dependent protein catabolic process via the multivesicular body sorting pathway"/>
    <property type="evidence" value="ECO:0007669"/>
    <property type="project" value="EnsemblFungi"/>
</dbReference>
<dbReference type="CDD" id="cd05479">
    <property type="entry name" value="RP_DDI"/>
    <property type="match status" value="1"/>
</dbReference>
<dbReference type="CDD" id="cd14309">
    <property type="entry name" value="UBA_scDdi1_like"/>
    <property type="match status" value="1"/>
</dbReference>
<dbReference type="CDD" id="cd01796">
    <property type="entry name" value="Ubl_Ddi1_like"/>
    <property type="match status" value="1"/>
</dbReference>
<dbReference type="FunFam" id="2.40.70.10:FF:000072">
    <property type="entry name" value="DNA damage-inducible protein"/>
    <property type="match status" value="1"/>
</dbReference>
<dbReference type="Gene3D" id="2.40.70.10">
    <property type="entry name" value="Acid Proteases"/>
    <property type="match status" value="1"/>
</dbReference>
<dbReference type="Gene3D" id="1.10.8.10">
    <property type="entry name" value="DNA helicase RuvA subunit, C-terminal domain"/>
    <property type="match status" value="1"/>
</dbReference>
<dbReference type="Gene3D" id="3.10.20.90">
    <property type="entry name" value="Phosphatidylinositol 3-kinase Catalytic Subunit, Chain A, domain 1"/>
    <property type="match status" value="1"/>
</dbReference>
<dbReference type="InterPro" id="IPR033882">
    <property type="entry name" value="DDI1_N"/>
</dbReference>
<dbReference type="InterPro" id="IPR001995">
    <property type="entry name" value="Peptidase_A2_cat"/>
</dbReference>
<dbReference type="InterPro" id="IPR019103">
    <property type="entry name" value="Peptidase_aspartic_DDI1-type"/>
</dbReference>
<dbReference type="InterPro" id="IPR021109">
    <property type="entry name" value="Peptidase_aspartic_dom_sf"/>
</dbReference>
<dbReference type="InterPro" id="IPR015940">
    <property type="entry name" value="UBA"/>
</dbReference>
<dbReference type="InterPro" id="IPR009060">
    <property type="entry name" value="UBA-like_sf"/>
</dbReference>
<dbReference type="InterPro" id="IPR000626">
    <property type="entry name" value="Ubiquitin-like_dom"/>
</dbReference>
<dbReference type="InterPro" id="IPR029071">
    <property type="entry name" value="Ubiquitin-like_domsf"/>
</dbReference>
<dbReference type="PANTHER" id="PTHR12917">
    <property type="entry name" value="ASPARTYL PROTEASE DDI-RELATED"/>
    <property type="match status" value="1"/>
</dbReference>
<dbReference type="PANTHER" id="PTHR12917:SF1">
    <property type="entry name" value="AT13091P"/>
    <property type="match status" value="1"/>
</dbReference>
<dbReference type="Pfam" id="PF09668">
    <property type="entry name" value="Asp_protease"/>
    <property type="match status" value="1"/>
</dbReference>
<dbReference type="Pfam" id="PF00627">
    <property type="entry name" value="UBA"/>
    <property type="match status" value="1"/>
</dbReference>
<dbReference type="SMART" id="SM00165">
    <property type="entry name" value="UBA"/>
    <property type="match status" value="1"/>
</dbReference>
<dbReference type="SUPFAM" id="SSF50630">
    <property type="entry name" value="Acid proteases"/>
    <property type="match status" value="1"/>
</dbReference>
<dbReference type="SUPFAM" id="SSF46934">
    <property type="entry name" value="UBA-like"/>
    <property type="match status" value="1"/>
</dbReference>
<dbReference type="SUPFAM" id="SSF54236">
    <property type="entry name" value="Ubiquitin-like"/>
    <property type="match status" value="1"/>
</dbReference>
<dbReference type="PROSITE" id="PS50030">
    <property type="entry name" value="UBA"/>
    <property type="match status" value="1"/>
</dbReference>
<dbReference type="PROSITE" id="PS50053">
    <property type="entry name" value="UBIQUITIN_2"/>
    <property type="match status" value="1"/>
</dbReference>
<keyword id="KW-0064">Aspartyl protease</keyword>
<keyword id="KW-0963">Cytoplasm</keyword>
<keyword id="KW-0378">Hydrolase</keyword>
<keyword id="KW-0645">Protease</keyword>
<keyword id="KW-0653">Protein transport</keyword>
<keyword id="KW-1185">Reference proteome</keyword>
<keyword id="KW-0813">Transport</keyword>
<evidence type="ECO:0000250" key="1"/>
<evidence type="ECO:0000250" key="2">
    <source>
        <dbReference type="UniProtKB" id="I7HUG0"/>
    </source>
</evidence>
<evidence type="ECO:0000250" key="3">
    <source>
        <dbReference type="UniProtKB" id="P40087"/>
    </source>
</evidence>
<evidence type="ECO:0000255" key="4">
    <source>
        <dbReference type="PROSITE-ProRule" id="PRU00212"/>
    </source>
</evidence>
<evidence type="ECO:0000255" key="5">
    <source>
        <dbReference type="PROSITE-ProRule" id="PRU00214"/>
    </source>
</evidence>
<evidence type="ECO:0000305" key="6"/>